<protein>
    <recommendedName>
        <fullName evidence="1">Modulator protein MzrA</fullName>
    </recommendedName>
</protein>
<comment type="function">
    <text evidence="1">Modulates the activity of the EnvZ/OmpR two-component regulatory system, probably by directly modulating EnvZ enzymatic activity and increasing stability of phosphorylated OmpR.</text>
</comment>
<comment type="subunit">
    <text evidence="1">Interacts with EnvZ.</text>
</comment>
<comment type="subcellular location">
    <subcellularLocation>
        <location evidence="1">Cell inner membrane</location>
        <topology evidence="1">Single-pass membrane protein</topology>
    </subcellularLocation>
</comment>
<comment type="similarity">
    <text evidence="1">Belongs to the MzrA family.</text>
</comment>
<name>MZRA_KLEP7</name>
<sequence>MMVMKRPSLRQFSWLLGGSLLLGALFWLWLAVQQQEATLAIRPVGQGIGMPDGFSVWHHLDANGIRFKSITPQKDGLLIKFDSTAQGAAAKEVLGRALPHGYIIALLEDDNSPTAWLSRLRDAPHRLG</sequence>
<reference key="1">
    <citation type="submission" date="2006-09" db="EMBL/GenBank/DDBJ databases">
        <authorList>
            <consortium name="The Klebsiella pneumonia Genome Sequencing Project"/>
            <person name="McClelland M."/>
            <person name="Sanderson E.K."/>
            <person name="Spieth J."/>
            <person name="Clifton W.S."/>
            <person name="Latreille P."/>
            <person name="Sabo A."/>
            <person name="Pepin K."/>
            <person name="Bhonagiri V."/>
            <person name="Porwollik S."/>
            <person name="Ali J."/>
            <person name="Wilson R.K."/>
        </authorList>
    </citation>
    <scope>NUCLEOTIDE SEQUENCE [LARGE SCALE GENOMIC DNA]</scope>
    <source>
        <strain>ATCC 700721 / MGH 78578</strain>
    </source>
</reference>
<evidence type="ECO:0000255" key="1">
    <source>
        <dbReference type="HAMAP-Rule" id="MF_00904"/>
    </source>
</evidence>
<evidence type="ECO:0007829" key="2">
    <source>
        <dbReference type="PDB" id="4PWU"/>
    </source>
</evidence>
<feature type="chain" id="PRO_0000413189" description="Modulator protein MzrA">
    <location>
        <begin position="1"/>
        <end position="128"/>
    </location>
</feature>
<feature type="topological domain" description="Cytoplasmic" evidence="1">
    <location>
        <begin position="1"/>
        <end position="11"/>
    </location>
</feature>
<feature type="transmembrane region" description="Helical" evidence="1">
    <location>
        <begin position="12"/>
        <end position="32"/>
    </location>
</feature>
<feature type="topological domain" description="Periplasmic" evidence="1">
    <location>
        <begin position="33"/>
        <end position="128"/>
    </location>
</feature>
<feature type="strand" evidence="2">
    <location>
        <begin position="37"/>
        <end position="45"/>
    </location>
</feature>
<feature type="helix" evidence="2">
    <location>
        <begin position="53"/>
        <end position="62"/>
    </location>
</feature>
<feature type="strand" evidence="2">
    <location>
        <begin position="68"/>
        <end position="73"/>
    </location>
</feature>
<feature type="strand" evidence="2">
    <location>
        <begin position="76"/>
        <end position="83"/>
    </location>
</feature>
<feature type="helix" evidence="2">
    <location>
        <begin position="84"/>
        <end position="97"/>
    </location>
</feature>
<feature type="strand" evidence="2">
    <location>
        <begin position="100"/>
        <end position="107"/>
    </location>
</feature>
<keyword id="KW-0002">3D-structure</keyword>
<keyword id="KW-0997">Cell inner membrane</keyword>
<keyword id="KW-1003">Cell membrane</keyword>
<keyword id="KW-0472">Membrane</keyword>
<keyword id="KW-0812">Transmembrane</keyword>
<keyword id="KW-1133">Transmembrane helix</keyword>
<accession>A6TED5</accession>
<organism>
    <name type="scientific">Klebsiella pneumoniae subsp. pneumoniae (strain ATCC 700721 / MGH 78578)</name>
    <dbReference type="NCBI Taxonomy" id="272620"/>
    <lineage>
        <taxon>Bacteria</taxon>
        <taxon>Pseudomonadati</taxon>
        <taxon>Pseudomonadota</taxon>
        <taxon>Gammaproteobacteria</taxon>
        <taxon>Enterobacterales</taxon>
        <taxon>Enterobacteriaceae</taxon>
        <taxon>Klebsiella/Raoultella group</taxon>
        <taxon>Klebsiella</taxon>
        <taxon>Klebsiella pneumoniae complex</taxon>
    </lineage>
</organism>
<dbReference type="EMBL" id="CP000647">
    <property type="protein sequence ID" value="ABR78919.1"/>
    <property type="molecule type" value="Genomic_DNA"/>
</dbReference>
<dbReference type="PDB" id="4PWU">
    <property type="method" value="X-ray"/>
    <property type="resolution" value="2.45 A"/>
    <property type="chains" value="A/B/C/D=32-128"/>
</dbReference>
<dbReference type="PDBsum" id="4PWU"/>
<dbReference type="SMR" id="A6TED5"/>
<dbReference type="STRING" id="272620.KPN_03524"/>
<dbReference type="PaxDb" id="272620-KPN_03524"/>
<dbReference type="DNASU" id="5341542"/>
<dbReference type="EnsemblBacteria" id="ABR78919">
    <property type="protein sequence ID" value="ABR78919"/>
    <property type="gene ID" value="KPN_03524"/>
</dbReference>
<dbReference type="KEGG" id="kpn:KPN_03524"/>
<dbReference type="HOGENOM" id="CLU_153761_0_0_6"/>
<dbReference type="EvolutionaryTrace" id="A6TED5"/>
<dbReference type="Proteomes" id="UP000000265">
    <property type="component" value="Chromosome"/>
</dbReference>
<dbReference type="GO" id="GO:0005886">
    <property type="term" value="C:plasma membrane"/>
    <property type="evidence" value="ECO:0007669"/>
    <property type="project" value="UniProtKB-SubCell"/>
</dbReference>
<dbReference type="GO" id="GO:0019901">
    <property type="term" value="F:protein kinase binding"/>
    <property type="evidence" value="ECO:0007669"/>
    <property type="project" value="UniProtKB-UniRule"/>
</dbReference>
<dbReference type="Gene3D" id="3.30.70.260">
    <property type="match status" value="1"/>
</dbReference>
<dbReference type="HAMAP" id="MF_00904">
    <property type="entry name" value="Modulator_MzrA"/>
    <property type="match status" value="1"/>
</dbReference>
<dbReference type="InterPro" id="IPR026574">
    <property type="entry name" value="Modulator_MzrA"/>
</dbReference>
<dbReference type="InterPro" id="IPR027398">
    <property type="entry name" value="SecD-TM"/>
</dbReference>
<dbReference type="NCBIfam" id="NF007915">
    <property type="entry name" value="PRK10629.1"/>
    <property type="match status" value="1"/>
</dbReference>
<dbReference type="Pfam" id="PF13721">
    <property type="entry name" value="SecD-TM1"/>
    <property type="match status" value="1"/>
</dbReference>
<proteinExistence type="evidence at protein level"/>
<gene>
    <name evidence="1" type="primary">mzrA</name>
    <name type="ordered locus">KPN78578_34950</name>
    <name type="ORF">KPN_03524</name>
</gene>